<feature type="chain" id="PRO_0000214089" description="Mitochondrial import inner membrane translocase subunit TIM16">
    <location>
        <begin position="1"/>
        <end position="121"/>
    </location>
</feature>
<feature type="region of interest" description="J-like">
    <location>
        <begin position="53"/>
        <end position="107"/>
    </location>
</feature>
<protein>
    <recommendedName>
        <fullName>Mitochondrial import inner membrane translocase subunit TIM16</fullName>
    </recommendedName>
    <alternativeName>
        <fullName>Presequence translocated-associated motor subunit PAM16</fullName>
    </alternativeName>
</protein>
<accession>Q59ZW9</accession>
<accession>A0A1D8PFW2</accession>
<comment type="function">
    <text evidence="1">Essential component of the PAM complex, a complex required for the translocation of transit peptide-containing proteins from the inner membrane into the mitochondrial matrix in an ATP-dependent manner. In the complex, it is required to regulate activity of mtHSP70 (SSC1) via its interaction with PAM18/TIM14. May act by positioning PAM18/TIM14 in juxtaposition to mtHSP70 at the translocon to maximize ATPase stimulation (By similarity).</text>
</comment>
<comment type="subunit">
    <text evidence="1">Heterodimer with PAM18. Component of the PAM complex, at least composed of mtHsp70, MGE1, TIM44, PAM16, PAM17 and PAM18 (By similarity).</text>
</comment>
<comment type="subcellular location">
    <subcellularLocation>
        <location evidence="1">Mitochondrion inner membrane</location>
        <topology evidence="1">Peripheral membrane protein</topology>
    </subcellularLocation>
</comment>
<comment type="domain">
    <text evidence="1">The J-like region, although related to the J domain does not stimulate ATPase activity of mtHSP70. It nevertheless mediates the heterodimerization with the J domain of PAM18 and is therefore essential for PAM complex function (By similarity).</text>
</comment>
<comment type="similarity">
    <text evidence="2">Belongs to the TIM16/PAM16 family.</text>
</comment>
<sequence>MAHRLLVNVIFTGASVFGRAFTEAYRQAAKASAAGAAGRPAKASSAGGIPVEEAMKILDLEKSELSLDKVEEKYEYLFNVNSKEQGNSFYLQSKVYYAMDTLKKELEYLEKLQNEKGAASN</sequence>
<name>TIM16_CANAL</name>
<reference key="1">
    <citation type="journal article" date="2004" name="Proc. Natl. Acad. Sci. U.S.A.">
        <title>The diploid genome sequence of Candida albicans.</title>
        <authorList>
            <person name="Jones T."/>
            <person name="Federspiel N.A."/>
            <person name="Chibana H."/>
            <person name="Dungan J."/>
            <person name="Kalman S."/>
            <person name="Magee B.B."/>
            <person name="Newport G."/>
            <person name="Thorstenson Y.R."/>
            <person name="Agabian N."/>
            <person name="Magee P.T."/>
            <person name="Davis R.W."/>
            <person name="Scherer S."/>
        </authorList>
    </citation>
    <scope>NUCLEOTIDE SEQUENCE [LARGE SCALE GENOMIC DNA]</scope>
    <source>
        <strain>SC5314 / ATCC MYA-2876</strain>
    </source>
</reference>
<reference key="2">
    <citation type="journal article" date="2007" name="Genome Biol.">
        <title>Assembly of the Candida albicans genome into sixteen supercontigs aligned on the eight chromosomes.</title>
        <authorList>
            <person name="van het Hoog M."/>
            <person name="Rast T.J."/>
            <person name="Martchenko M."/>
            <person name="Grindle S."/>
            <person name="Dignard D."/>
            <person name="Hogues H."/>
            <person name="Cuomo C."/>
            <person name="Berriman M."/>
            <person name="Scherer S."/>
            <person name="Magee B.B."/>
            <person name="Whiteway M."/>
            <person name="Chibana H."/>
            <person name="Nantel A."/>
            <person name="Magee P.T."/>
        </authorList>
    </citation>
    <scope>GENOME REANNOTATION</scope>
    <source>
        <strain>SC5314 / ATCC MYA-2876</strain>
    </source>
</reference>
<reference key="3">
    <citation type="journal article" date="2013" name="Genome Biol.">
        <title>Assembly of a phased diploid Candida albicans genome facilitates allele-specific measurements and provides a simple model for repeat and indel structure.</title>
        <authorList>
            <person name="Muzzey D."/>
            <person name="Schwartz K."/>
            <person name="Weissman J.S."/>
            <person name="Sherlock G."/>
        </authorList>
    </citation>
    <scope>NUCLEOTIDE SEQUENCE [LARGE SCALE GENOMIC DNA]</scope>
    <scope>GENOME REANNOTATION</scope>
    <source>
        <strain>SC5314 / ATCC MYA-2876</strain>
    </source>
</reference>
<organism>
    <name type="scientific">Candida albicans (strain SC5314 / ATCC MYA-2876)</name>
    <name type="common">Yeast</name>
    <dbReference type="NCBI Taxonomy" id="237561"/>
    <lineage>
        <taxon>Eukaryota</taxon>
        <taxon>Fungi</taxon>
        <taxon>Dikarya</taxon>
        <taxon>Ascomycota</taxon>
        <taxon>Saccharomycotina</taxon>
        <taxon>Pichiomycetes</taxon>
        <taxon>Debaryomycetaceae</taxon>
        <taxon>Candida/Lodderomyces clade</taxon>
        <taxon>Candida</taxon>
    </lineage>
</organism>
<dbReference type="EMBL" id="CP017623">
    <property type="protein sequence ID" value="AOW27015.1"/>
    <property type="molecule type" value="Genomic_DNA"/>
</dbReference>
<dbReference type="RefSeq" id="XP_715023.1">
    <property type="nucleotide sequence ID" value="XM_709930.1"/>
</dbReference>
<dbReference type="SMR" id="Q59ZW9"/>
<dbReference type="FunCoup" id="Q59ZW9">
    <property type="interactions" value="259"/>
</dbReference>
<dbReference type="STRING" id="237561.Q59ZW9"/>
<dbReference type="EnsemblFungi" id="C1_14150C_A-T">
    <property type="protein sequence ID" value="C1_14150C_A-T-p1"/>
    <property type="gene ID" value="C1_14150C_A"/>
</dbReference>
<dbReference type="GeneID" id="3643321"/>
<dbReference type="KEGG" id="cal:CAALFM_C114150CA"/>
<dbReference type="CGD" id="CAL0000176330">
    <property type="gene designation" value="PAM16"/>
</dbReference>
<dbReference type="VEuPathDB" id="FungiDB:C1_14150C_A"/>
<dbReference type="eggNOG" id="KOG3442">
    <property type="taxonomic scope" value="Eukaryota"/>
</dbReference>
<dbReference type="HOGENOM" id="CLU_101461_0_1_1"/>
<dbReference type="InParanoid" id="Q59ZW9"/>
<dbReference type="OMA" id="RMFKIND"/>
<dbReference type="OrthoDB" id="10262892at2759"/>
<dbReference type="Proteomes" id="UP000000559">
    <property type="component" value="Chromosome 1"/>
</dbReference>
<dbReference type="GO" id="GO:0001405">
    <property type="term" value="C:PAM complex, Tim23 associated import motor"/>
    <property type="evidence" value="ECO:0007669"/>
    <property type="project" value="EnsemblFungi"/>
</dbReference>
<dbReference type="GO" id="GO:0005744">
    <property type="term" value="C:TIM23 mitochondrial import inner membrane translocase complex"/>
    <property type="evidence" value="ECO:0000318"/>
    <property type="project" value="GO_Central"/>
</dbReference>
<dbReference type="GO" id="GO:0019904">
    <property type="term" value="F:protein domain specific binding"/>
    <property type="evidence" value="ECO:0007669"/>
    <property type="project" value="EnsemblFungi"/>
</dbReference>
<dbReference type="GO" id="GO:0030150">
    <property type="term" value="P:protein import into mitochondrial matrix"/>
    <property type="evidence" value="ECO:0000318"/>
    <property type="project" value="GO_Central"/>
</dbReference>
<dbReference type="FunFam" id="1.10.287.110:FF:000006">
    <property type="entry name" value="Import inner membrane translocase subunit TIM16"/>
    <property type="match status" value="1"/>
</dbReference>
<dbReference type="Gene3D" id="1.10.287.110">
    <property type="entry name" value="DnaJ domain"/>
    <property type="match status" value="1"/>
</dbReference>
<dbReference type="InterPro" id="IPR036869">
    <property type="entry name" value="J_dom_sf"/>
</dbReference>
<dbReference type="InterPro" id="IPR005341">
    <property type="entry name" value="Tim16"/>
</dbReference>
<dbReference type="PANTHER" id="PTHR12388">
    <property type="entry name" value="MITOCHONDRIA ASSOCIATED GRANULOCYTE MACROPHAGE CSF SIGNALING MOLECULE"/>
    <property type="match status" value="1"/>
</dbReference>
<dbReference type="PANTHER" id="PTHR12388:SF0">
    <property type="entry name" value="MITOCHONDRIAL IMPORT INNER MEMBRANE TRANSLOCASE SUBUNIT TIM16"/>
    <property type="match status" value="1"/>
</dbReference>
<dbReference type="Pfam" id="PF03656">
    <property type="entry name" value="Pam16"/>
    <property type="match status" value="1"/>
</dbReference>
<gene>
    <name type="primary">PAM16</name>
    <name type="synonym">TIM16</name>
    <name type="ordered locus">CAALFM_C114150CA</name>
    <name type="ORF">CaO19.7222</name>
</gene>
<proteinExistence type="inferred from homology"/>
<evidence type="ECO:0000250" key="1"/>
<evidence type="ECO:0000305" key="2"/>
<keyword id="KW-0472">Membrane</keyword>
<keyword id="KW-0496">Mitochondrion</keyword>
<keyword id="KW-0999">Mitochondrion inner membrane</keyword>
<keyword id="KW-0653">Protein transport</keyword>
<keyword id="KW-1185">Reference proteome</keyword>
<keyword id="KW-0811">Translocation</keyword>
<keyword id="KW-0813">Transport</keyword>